<comment type="catalytic activity">
    <reaction evidence="1">
        <text>L-methionyl-[protein] + [thioredoxin]-disulfide + H2O = L-methionyl-(R)-S-oxide-[protein] + [thioredoxin]-dithiol</text>
        <dbReference type="Rhea" id="RHEA:24164"/>
        <dbReference type="Rhea" id="RHEA-COMP:10698"/>
        <dbReference type="Rhea" id="RHEA-COMP:10700"/>
        <dbReference type="Rhea" id="RHEA-COMP:12313"/>
        <dbReference type="Rhea" id="RHEA-COMP:12314"/>
        <dbReference type="ChEBI" id="CHEBI:15377"/>
        <dbReference type="ChEBI" id="CHEBI:16044"/>
        <dbReference type="ChEBI" id="CHEBI:29950"/>
        <dbReference type="ChEBI" id="CHEBI:45764"/>
        <dbReference type="ChEBI" id="CHEBI:50058"/>
        <dbReference type="EC" id="1.8.4.12"/>
    </reaction>
</comment>
<comment type="similarity">
    <text evidence="1">Belongs to the MsrB Met sulfoxide reductase family.</text>
</comment>
<reference key="1">
    <citation type="journal article" date="2002" name="Proc. Natl. Acad. Sci. U.S.A.">
        <title>The genome sequence of the facultative intracellular pathogen Brucella melitensis.</title>
        <authorList>
            <person name="DelVecchio V.G."/>
            <person name="Kapatral V."/>
            <person name="Redkar R.J."/>
            <person name="Patra G."/>
            <person name="Mujer C."/>
            <person name="Los T."/>
            <person name="Ivanova N."/>
            <person name="Anderson I."/>
            <person name="Bhattacharyya A."/>
            <person name="Lykidis A."/>
            <person name="Reznik G."/>
            <person name="Jablonski L."/>
            <person name="Larsen N."/>
            <person name="D'Souza M."/>
            <person name="Bernal A."/>
            <person name="Mazur M."/>
            <person name="Goltsman E."/>
            <person name="Selkov E."/>
            <person name="Elzer P.H."/>
            <person name="Hagius S."/>
            <person name="O'Callaghan D."/>
            <person name="Letesson J.-J."/>
            <person name="Haselkorn R."/>
            <person name="Kyrpides N.C."/>
            <person name="Overbeek R."/>
        </authorList>
    </citation>
    <scope>NUCLEOTIDE SEQUENCE [LARGE SCALE GENOMIC DNA]</scope>
    <source>
        <strain>ATCC 23456 / CCUG 17765 / NCTC 10094 / 16M</strain>
    </source>
</reference>
<evidence type="ECO:0000255" key="1">
    <source>
        <dbReference type="HAMAP-Rule" id="MF_01400"/>
    </source>
</evidence>
<evidence type="ECO:0000255" key="2">
    <source>
        <dbReference type="PROSITE-ProRule" id="PRU01126"/>
    </source>
</evidence>
<sequence length="146" mass="16281">MKYQKSAEAIAKLSAEQYRVTQENGTERPGTGEYLYNKEPGIYVDIVSGEPLFASSDKYESHCGWPSFTKPIERANVTELTDMSHGMVRTEVRSAHGDSHLGHVFPDGPVDRGGLRYCINSASLRFVPKDRMEAEGYGDYLDQVEG</sequence>
<feature type="chain" id="PRO_0000140264" description="Peptide methionine sulfoxide reductase MsrB">
    <location>
        <begin position="1"/>
        <end position="146"/>
    </location>
</feature>
<feature type="domain" description="MsrB" evidence="2">
    <location>
        <begin position="6"/>
        <end position="129"/>
    </location>
</feature>
<feature type="active site" description="Nucleophile" evidence="2">
    <location>
        <position position="118"/>
    </location>
</feature>
<proteinExistence type="inferred from homology"/>
<name>MSRB_BRUME</name>
<gene>
    <name evidence="1" type="primary">msrB</name>
    <name type="ordered locus">BMEII0819</name>
</gene>
<organism>
    <name type="scientific">Brucella melitensis biotype 1 (strain ATCC 23456 / CCUG 17765 / NCTC 10094 / 16M)</name>
    <dbReference type="NCBI Taxonomy" id="224914"/>
    <lineage>
        <taxon>Bacteria</taxon>
        <taxon>Pseudomonadati</taxon>
        <taxon>Pseudomonadota</taxon>
        <taxon>Alphaproteobacteria</taxon>
        <taxon>Hyphomicrobiales</taxon>
        <taxon>Brucellaceae</taxon>
        <taxon>Brucella/Ochrobactrum group</taxon>
        <taxon>Brucella</taxon>
    </lineage>
</organism>
<protein>
    <recommendedName>
        <fullName evidence="1">Peptide methionine sulfoxide reductase MsrB</fullName>
        <ecNumber evidence="1">1.8.4.12</ecNumber>
    </recommendedName>
    <alternativeName>
        <fullName evidence="1">Peptide-methionine (R)-S-oxide reductase</fullName>
    </alternativeName>
</protein>
<keyword id="KW-0560">Oxidoreductase</keyword>
<dbReference type="EC" id="1.8.4.12" evidence="1"/>
<dbReference type="EMBL" id="AE008918">
    <property type="protein sequence ID" value="AAL54061.1"/>
    <property type="molecule type" value="Genomic_DNA"/>
</dbReference>
<dbReference type="PIR" id="AB3612">
    <property type="entry name" value="AB3612"/>
</dbReference>
<dbReference type="RefSeq" id="WP_004681816.1">
    <property type="nucleotide sequence ID" value="NZ_GG703779.1"/>
</dbReference>
<dbReference type="SMR" id="P65447"/>
<dbReference type="GeneID" id="97535410"/>
<dbReference type="KEGG" id="bme:BMEII0819"/>
<dbReference type="KEGG" id="bmel:DK63_2429"/>
<dbReference type="PATRIC" id="fig|224914.52.peg.2545"/>
<dbReference type="eggNOG" id="COG0229">
    <property type="taxonomic scope" value="Bacteria"/>
</dbReference>
<dbReference type="PhylomeDB" id="P65447"/>
<dbReference type="Proteomes" id="UP000000419">
    <property type="component" value="Chromosome II"/>
</dbReference>
<dbReference type="GO" id="GO:0005737">
    <property type="term" value="C:cytoplasm"/>
    <property type="evidence" value="ECO:0007669"/>
    <property type="project" value="TreeGrafter"/>
</dbReference>
<dbReference type="GO" id="GO:0033743">
    <property type="term" value="F:peptide-methionine (R)-S-oxide reductase activity"/>
    <property type="evidence" value="ECO:0007669"/>
    <property type="project" value="UniProtKB-UniRule"/>
</dbReference>
<dbReference type="GO" id="GO:0030091">
    <property type="term" value="P:protein repair"/>
    <property type="evidence" value="ECO:0007669"/>
    <property type="project" value="InterPro"/>
</dbReference>
<dbReference type="GO" id="GO:0006979">
    <property type="term" value="P:response to oxidative stress"/>
    <property type="evidence" value="ECO:0007669"/>
    <property type="project" value="InterPro"/>
</dbReference>
<dbReference type="FunFam" id="2.170.150.20:FF:000003">
    <property type="entry name" value="Peptide methionine sulfoxide reductase MsrB"/>
    <property type="match status" value="1"/>
</dbReference>
<dbReference type="Gene3D" id="2.170.150.20">
    <property type="entry name" value="Peptide methionine sulfoxide reductase"/>
    <property type="match status" value="1"/>
</dbReference>
<dbReference type="HAMAP" id="MF_01400">
    <property type="entry name" value="MsrB"/>
    <property type="match status" value="1"/>
</dbReference>
<dbReference type="InterPro" id="IPR028427">
    <property type="entry name" value="Met_Sox_Rdtase_MsrB"/>
</dbReference>
<dbReference type="InterPro" id="IPR002579">
    <property type="entry name" value="Met_Sox_Rdtase_MsrB_dom"/>
</dbReference>
<dbReference type="InterPro" id="IPR011057">
    <property type="entry name" value="Mss4-like_sf"/>
</dbReference>
<dbReference type="NCBIfam" id="TIGR00357">
    <property type="entry name" value="peptide-methionine (R)-S-oxide reductase MsrB"/>
    <property type="match status" value="1"/>
</dbReference>
<dbReference type="PANTHER" id="PTHR10173">
    <property type="entry name" value="METHIONINE SULFOXIDE REDUCTASE"/>
    <property type="match status" value="1"/>
</dbReference>
<dbReference type="PANTHER" id="PTHR10173:SF59">
    <property type="entry name" value="PEPTIDE METHIONINE SULFOXIDE REDUCTASE MSRA_MSRB"/>
    <property type="match status" value="1"/>
</dbReference>
<dbReference type="Pfam" id="PF01641">
    <property type="entry name" value="SelR"/>
    <property type="match status" value="1"/>
</dbReference>
<dbReference type="SUPFAM" id="SSF51316">
    <property type="entry name" value="Mss4-like"/>
    <property type="match status" value="1"/>
</dbReference>
<dbReference type="PROSITE" id="PS51790">
    <property type="entry name" value="MSRB"/>
    <property type="match status" value="1"/>
</dbReference>
<accession>P65447</accession>
<accession>Q8YBR7</accession>